<dbReference type="EMBL" id="CP001182">
    <property type="protein sequence ID" value="ACJ39737.1"/>
    <property type="molecule type" value="Genomic_DNA"/>
</dbReference>
<dbReference type="RefSeq" id="WP_000543541.1">
    <property type="nucleotide sequence ID" value="NC_011586.2"/>
</dbReference>
<dbReference type="SMR" id="B7I302"/>
<dbReference type="GeneID" id="92892221"/>
<dbReference type="KEGG" id="abn:AB57_0311"/>
<dbReference type="HOGENOM" id="CLU_108412_0_0_6"/>
<dbReference type="Proteomes" id="UP000007094">
    <property type="component" value="Chromosome"/>
</dbReference>
<dbReference type="GO" id="GO:0005524">
    <property type="term" value="F:ATP binding"/>
    <property type="evidence" value="ECO:0007669"/>
    <property type="project" value="UniProtKB-KW"/>
</dbReference>
<dbReference type="GO" id="GO:0003677">
    <property type="term" value="F:DNA binding"/>
    <property type="evidence" value="ECO:0007669"/>
    <property type="project" value="UniProtKB-KW"/>
</dbReference>
<dbReference type="GO" id="GO:0008270">
    <property type="term" value="F:zinc ion binding"/>
    <property type="evidence" value="ECO:0007669"/>
    <property type="project" value="UniProtKB-UniRule"/>
</dbReference>
<dbReference type="GO" id="GO:0045892">
    <property type="term" value="P:negative regulation of DNA-templated transcription"/>
    <property type="evidence" value="ECO:0007669"/>
    <property type="project" value="UniProtKB-UniRule"/>
</dbReference>
<dbReference type="HAMAP" id="MF_00440">
    <property type="entry name" value="NrdR"/>
    <property type="match status" value="1"/>
</dbReference>
<dbReference type="InterPro" id="IPR005144">
    <property type="entry name" value="ATP-cone_dom"/>
</dbReference>
<dbReference type="InterPro" id="IPR055173">
    <property type="entry name" value="NrdR-like_N"/>
</dbReference>
<dbReference type="InterPro" id="IPR003796">
    <property type="entry name" value="RNR_NrdR-like"/>
</dbReference>
<dbReference type="NCBIfam" id="TIGR00244">
    <property type="entry name" value="transcriptional regulator NrdR"/>
    <property type="match status" value="1"/>
</dbReference>
<dbReference type="PANTHER" id="PTHR30455">
    <property type="entry name" value="TRANSCRIPTIONAL REPRESSOR NRDR"/>
    <property type="match status" value="1"/>
</dbReference>
<dbReference type="PANTHER" id="PTHR30455:SF2">
    <property type="entry name" value="TRANSCRIPTIONAL REPRESSOR NRDR"/>
    <property type="match status" value="1"/>
</dbReference>
<dbReference type="Pfam" id="PF03477">
    <property type="entry name" value="ATP-cone"/>
    <property type="match status" value="1"/>
</dbReference>
<dbReference type="Pfam" id="PF22811">
    <property type="entry name" value="Zn_ribbon_NrdR"/>
    <property type="match status" value="1"/>
</dbReference>
<dbReference type="PROSITE" id="PS51161">
    <property type="entry name" value="ATP_CONE"/>
    <property type="match status" value="1"/>
</dbReference>
<protein>
    <recommendedName>
        <fullName evidence="1">Transcriptional repressor NrdR</fullName>
    </recommendedName>
</protein>
<sequence>MHCPFCNAADSKVIDSRLAAEGCQIRRRRECVSCGERFTTFESYEVVMPRVIKSNGKNEPFDEAKLRRSLMHALQKRPVTQEQIETVLSDIQLQIRRLGERDVKSRTIGEIVMQSLFALDHVAYVRFASVYQDFQDVEAFRRQIEQMQQREH</sequence>
<accession>B7I302</accession>
<organism>
    <name type="scientific">Acinetobacter baumannii (strain AB0057)</name>
    <dbReference type="NCBI Taxonomy" id="480119"/>
    <lineage>
        <taxon>Bacteria</taxon>
        <taxon>Pseudomonadati</taxon>
        <taxon>Pseudomonadota</taxon>
        <taxon>Gammaproteobacteria</taxon>
        <taxon>Moraxellales</taxon>
        <taxon>Moraxellaceae</taxon>
        <taxon>Acinetobacter</taxon>
        <taxon>Acinetobacter calcoaceticus/baumannii complex</taxon>
    </lineage>
</organism>
<feature type="chain" id="PRO_1000191766" description="Transcriptional repressor NrdR">
    <location>
        <begin position="1"/>
        <end position="152"/>
    </location>
</feature>
<feature type="domain" description="ATP-cone" evidence="1">
    <location>
        <begin position="49"/>
        <end position="139"/>
    </location>
</feature>
<feature type="zinc finger region" evidence="1">
    <location>
        <begin position="3"/>
        <end position="34"/>
    </location>
</feature>
<reference key="1">
    <citation type="journal article" date="2008" name="J. Bacteriol.">
        <title>Comparative genome sequence analysis of multidrug-resistant Acinetobacter baumannii.</title>
        <authorList>
            <person name="Adams M.D."/>
            <person name="Goglin K."/>
            <person name="Molyneaux N."/>
            <person name="Hujer K.M."/>
            <person name="Lavender H."/>
            <person name="Jamison J.J."/>
            <person name="MacDonald I.J."/>
            <person name="Martin K.M."/>
            <person name="Russo T."/>
            <person name="Campagnari A.A."/>
            <person name="Hujer A.M."/>
            <person name="Bonomo R.A."/>
            <person name="Gill S.R."/>
        </authorList>
    </citation>
    <scope>NUCLEOTIDE SEQUENCE [LARGE SCALE GENOMIC DNA]</scope>
    <source>
        <strain>AB0057</strain>
    </source>
</reference>
<comment type="function">
    <text evidence="1">Negatively regulates transcription of bacterial ribonucleotide reductase nrd genes and operons by binding to NrdR-boxes.</text>
</comment>
<comment type="cofactor">
    <cofactor evidence="1">
        <name>Zn(2+)</name>
        <dbReference type="ChEBI" id="CHEBI:29105"/>
    </cofactor>
    <text evidence="1">Binds 1 zinc ion.</text>
</comment>
<comment type="similarity">
    <text evidence="1">Belongs to the NrdR family.</text>
</comment>
<gene>
    <name evidence="1" type="primary">nrdR</name>
    <name type="ordered locus">AB57_0311</name>
</gene>
<name>NRDR_ACIB5</name>
<keyword id="KW-0067">ATP-binding</keyword>
<keyword id="KW-0238">DNA-binding</keyword>
<keyword id="KW-0479">Metal-binding</keyword>
<keyword id="KW-0547">Nucleotide-binding</keyword>
<keyword id="KW-0678">Repressor</keyword>
<keyword id="KW-0804">Transcription</keyword>
<keyword id="KW-0805">Transcription regulation</keyword>
<keyword id="KW-0862">Zinc</keyword>
<keyword id="KW-0863">Zinc-finger</keyword>
<proteinExistence type="inferred from homology"/>
<evidence type="ECO:0000255" key="1">
    <source>
        <dbReference type="HAMAP-Rule" id="MF_00440"/>
    </source>
</evidence>